<protein>
    <recommendedName>
        <fullName>Phosphoribosyl-ATP pyrophosphatase 2</fullName>
        <shortName>PRA-PH 2</shortName>
        <ecNumber>3.6.1.31</ecNumber>
    </recommendedName>
</protein>
<proteinExistence type="inferred from homology"/>
<reference key="1">
    <citation type="journal article" date="2004" name="Nat. Biotechnol.">
        <title>Complete genome sequence of the metabolically versatile photosynthetic bacterium Rhodopseudomonas palustris.</title>
        <authorList>
            <person name="Larimer F.W."/>
            <person name="Chain P."/>
            <person name="Hauser L."/>
            <person name="Lamerdin J.E."/>
            <person name="Malfatti S."/>
            <person name="Do L."/>
            <person name="Land M.L."/>
            <person name="Pelletier D.A."/>
            <person name="Beatty J.T."/>
            <person name="Lang A.S."/>
            <person name="Tabita F.R."/>
            <person name="Gibson J.L."/>
            <person name="Hanson T.E."/>
            <person name="Bobst C."/>
            <person name="Torres y Torres J.L."/>
            <person name="Peres C."/>
            <person name="Harrison F.H."/>
            <person name="Gibson J."/>
            <person name="Harwood C.S."/>
        </authorList>
    </citation>
    <scope>NUCLEOTIDE SEQUENCE [LARGE SCALE GENOMIC DNA]</scope>
    <source>
        <strain>ATCC BAA-98 / CGA009</strain>
    </source>
</reference>
<gene>
    <name type="primary">hisE2</name>
    <name type="ordered locus">RPA4705</name>
</gene>
<comment type="catalytic activity">
    <reaction>
        <text>1-(5-phospho-beta-D-ribosyl)-ATP + H2O = 1-(5-phospho-beta-D-ribosyl)-5'-AMP + diphosphate + H(+)</text>
        <dbReference type="Rhea" id="RHEA:22828"/>
        <dbReference type="ChEBI" id="CHEBI:15377"/>
        <dbReference type="ChEBI" id="CHEBI:15378"/>
        <dbReference type="ChEBI" id="CHEBI:33019"/>
        <dbReference type="ChEBI" id="CHEBI:59457"/>
        <dbReference type="ChEBI" id="CHEBI:73183"/>
        <dbReference type="EC" id="3.6.1.31"/>
    </reaction>
</comment>
<comment type="pathway">
    <text>Amino-acid biosynthesis; L-histidine biosynthesis; L-histidine from 5-phospho-alpha-D-ribose 1-diphosphate: step 2/9.</text>
</comment>
<comment type="subcellular location">
    <subcellularLocation>
        <location evidence="1">Cytoplasm</location>
    </subcellularLocation>
</comment>
<comment type="similarity">
    <text evidence="3">Belongs to the PRA-PH family.</text>
</comment>
<name>HIS22_RHOPA</name>
<organism>
    <name type="scientific">Rhodopseudomonas palustris (strain ATCC BAA-98 / CGA009)</name>
    <dbReference type="NCBI Taxonomy" id="258594"/>
    <lineage>
        <taxon>Bacteria</taxon>
        <taxon>Pseudomonadati</taxon>
        <taxon>Pseudomonadota</taxon>
        <taxon>Alphaproteobacteria</taxon>
        <taxon>Hyphomicrobiales</taxon>
        <taxon>Nitrobacteraceae</taxon>
        <taxon>Rhodopseudomonas</taxon>
    </lineage>
</organism>
<dbReference type="EC" id="3.6.1.31"/>
<dbReference type="EMBL" id="BX572608">
    <property type="protein sequence ID" value="CAE30145.1"/>
    <property type="molecule type" value="Genomic_DNA"/>
</dbReference>
<dbReference type="RefSeq" id="WP_011160237.1">
    <property type="nucleotide sequence ID" value="NZ_CP116810.1"/>
</dbReference>
<dbReference type="SMR" id="P60539"/>
<dbReference type="STRING" id="258594.RPA4705"/>
<dbReference type="GeneID" id="66895862"/>
<dbReference type="eggNOG" id="COG0140">
    <property type="taxonomic scope" value="Bacteria"/>
</dbReference>
<dbReference type="HOGENOM" id="CLU_123337_1_3_5"/>
<dbReference type="PhylomeDB" id="P60539"/>
<dbReference type="UniPathway" id="UPA00031">
    <property type="reaction ID" value="UER00007"/>
</dbReference>
<dbReference type="GO" id="GO:0005737">
    <property type="term" value="C:cytoplasm"/>
    <property type="evidence" value="ECO:0007669"/>
    <property type="project" value="UniProtKB-SubCell"/>
</dbReference>
<dbReference type="GO" id="GO:0005524">
    <property type="term" value="F:ATP binding"/>
    <property type="evidence" value="ECO:0007669"/>
    <property type="project" value="UniProtKB-KW"/>
</dbReference>
<dbReference type="GO" id="GO:0004636">
    <property type="term" value="F:phosphoribosyl-ATP diphosphatase activity"/>
    <property type="evidence" value="ECO:0007669"/>
    <property type="project" value="UniProtKB-UniRule"/>
</dbReference>
<dbReference type="GO" id="GO:0000105">
    <property type="term" value="P:L-histidine biosynthetic process"/>
    <property type="evidence" value="ECO:0007669"/>
    <property type="project" value="UniProtKB-UniRule"/>
</dbReference>
<dbReference type="CDD" id="cd11534">
    <property type="entry name" value="NTP-PPase_HisIE_like"/>
    <property type="match status" value="1"/>
</dbReference>
<dbReference type="Gene3D" id="1.10.287.1080">
    <property type="entry name" value="MazG-like"/>
    <property type="match status" value="1"/>
</dbReference>
<dbReference type="HAMAP" id="MF_01020">
    <property type="entry name" value="HisE"/>
    <property type="match status" value="1"/>
</dbReference>
<dbReference type="InterPro" id="IPR008179">
    <property type="entry name" value="HisE"/>
</dbReference>
<dbReference type="InterPro" id="IPR021130">
    <property type="entry name" value="PRib-ATP_PPHydrolase-like"/>
</dbReference>
<dbReference type="NCBIfam" id="TIGR03188">
    <property type="entry name" value="histidine_hisI"/>
    <property type="match status" value="1"/>
</dbReference>
<dbReference type="PANTHER" id="PTHR42945">
    <property type="entry name" value="HISTIDINE BIOSYNTHESIS BIFUNCTIONAL PROTEIN"/>
    <property type="match status" value="1"/>
</dbReference>
<dbReference type="PANTHER" id="PTHR42945:SF1">
    <property type="entry name" value="HISTIDINE BIOSYNTHESIS BIFUNCTIONAL PROTEIN HIS7"/>
    <property type="match status" value="1"/>
</dbReference>
<dbReference type="Pfam" id="PF01503">
    <property type="entry name" value="PRA-PH"/>
    <property type="match status" value="1"/>
</dbReference>
<dbReference type="SUPFAM" id="SSF101386">
    <property type="entry name" value="all-alpha NTP pyrophosphatases"/>
    <property type="match status" value="1"/>
</dbReference>
<keyword id="KW-0028">Amino-acid biosynthesis</keyword>
<keyword id="KW-0067">ATP-binding</keyword>
<keyword id="KW-0963">Cytoplasm</keyword>
<keyword id="KW-0368">Histidine biosynthesis</keyword>
<keyword id="KW-0378">Hydrolase</keyword>
<keyword id="KW-0547">Nucleotide-binding</keyword>
<feature type="chain" id="PRO_0000136385" description="Phosphoribosyl-ATP pyrophosphatase 2">
    <location>
        <begin position="1"/>
        <end position="131"/>
    </location>
</feature>
<feature type="region of interest" description="Disordered" evidence="2">
    <location>
        <begin position="105"/>
        <end position="131"/>
    </location>
</feature>
<evidence type="ECO:0000250" key="1"/>
<evidence type="ECO:0000256" key="2">
    <source>
        <dbReference type="SAM" id="MobiDB-lite"/>
    </source>
</evidence>
<evidence type="ECO:0000305" key="3"/>
<sequence length="131" mass="14605">MADSLDRLYQAVLAARDLDPATSRTARLFQRGSGKMAKKLAEEAIEVVIDAVNGNREAVIRESADLLYNLTVLWASAGVRPEDVWAEMRRRENLLGIAEKLPKSRIGKPAAPHATRRPVIPQEARAVRKHR</sequence>
<accession>P60539</accession>